<proteinExistence type="inferred from homology"/>
<evidence type="ECO:0000250" key="1">
    <source>
        <dbReference type="UniProtKB" id="P49588"/>
    </source>
</evidence>
<evidence type="ECO:0000255" key="2">
    <source>
        <dbReference type="HAMAP-Rule" id="MF_03133"/>
    </source>
</evidence>
<evidence type="ECO:0000305" key="3"/>
<organism>
    <name type="scientific">Rattus norvegicus</name>
    <name type="common">Rat</name>
    <dbReference type="NCBI Taxonomy" id="10116"/>
    <lineage>
        <taxon>Eukaryota</taxon>
        <taxon>Metazoa</taxon>
        <taxon>Chordata</taxon>
        <taxon>Craniata</taxon>
        <taxon>Vertebrata</taxon>
        <taxon>Euteleostomi</taxon>
        <taxon>Mammalia</taxon>
        <taxon>Eutheria</taxon>
        <taxon>Euarchontoglires</taxon>
        <taxon>Glires</taxon>
        <taxon>Rodentia</taxon>
        <taxon>Myomorpha</taxon>
        <taxon>Muroidea</taxon>
        <taxon>Muridae</taxon>
        <taxon>Murinae</taxon>
        <taxon>Rattus</taxon>
    </lineage>
</organism>
<sequence>MAASVAAAAGRLRRAIGRSCPWQRFSTEPHPPHGAAVRDAFLSFFRDRHGHRLVPSASVRPRGDPSLLFVNAGMNQFKPIFLGTVDPRSEMAGFRRVANSQKCVRAGGRHNDLEDVGRDLSHHTFFEMLGNWAFGGEYFKKEACSMAWELLTQVYGIPEDRLWVSYFSGDSKTGLDPDLETRDIWLSLGVPASRVLSFGLQENFWEMGDTGPCGPCTEIHYDLAGGMGPPQLVELWNLVFMQHYREADGSLHLLPQQHVDTGMGLERLVAVLQGKHSTYDTDLFSPLLDAIHQSCRVPPYSGRVGAADEGRIDTAYRVVADHIRTLSVCIADGVSPGMSGAPLVLRRILRRAVRYSTEVLQAPPGFLGNLVPVVVATLGAAYPELQKNSVKVLIWEIANLVSEDEAAFLASLQRGRRIIDRTVKRLGPSDLFPAEVAWSLSLSGNLGIPLDLVQLMLEEKGVKLDTAGLEQLAQKEAQHRAQQAEAAQEEGLCLDVHALEELHRQGIPTTDDSPKYNYSLRPNGDYEFGLCEAQVLQLYSETGTAVASVGEGQRCGLLLDRTNFYAEQGGQASDRGYLIRTGQQDVLFPVARAQVCGGFILHEAMAPECLQVGDRVQLYVDKAWRMGCMVKHTATHLLNWALRQTLGPTTEQRGSHLNPERLRFDVATQTPLTTEQLRTVESYVQEAVGQDKPVYMEEVPLAHTARIPGLRSLDEVYPDPVRVVSVGVPVAQALAPASQAALQTSVELCCGTHLLSTGAVGDLVIIGDRQLVKGITRLLAITGEQAQQAREVGQSLSQEVEVASERLSRGSRDLLEAHRLSKDIGRLIEFTESAVIPQWQRQEQQTTLKMLQRRANTAIRKLEKSQATEKSQELLKRHSEGPLIVDTVSAQSLSVLVKVVRQLCKQAPSMSVLLLSPQPTGSVLCACQVAQGATPTFTAEAWALAVCSHMGGKAWGSPVIAQGTGHTADLEAALRTARAYALNQL</sequence>
<comment type="function">
    <text evidence="2">Catalyzes the attachment of alanine to tRNA(Ala) in a two-step reaction: alanine is first activated by ATP to form Ala-AMP and then transferred to the acceptor end of tRNA(Ala). Also edits incorrectly charged tRNA(Ala) via its editing domain (By similarity). In presence of high levels of lactate, also acts as a protein lactyltransferase that mediates lactylation of lysine residues in target proteins, such as CGAS (By similarity). Acts as an inhibitor of cGAS/STING signaling by catalyzing lactylation of CGAS, preventing the formation of liquid-like droplets in which CGAS is activated (By similarity).</text>
</comment>
<comment type="catalytic activity">
    <reaction evidence="2">
        <text>tRNA(Ala) + L-alanine + ATP = L-alanyl-tRNA(Ala) + AMP + diphosphate</text>
        <dbReference type="Rhea" id="RHEA:12540"/>
        <dbReference type="Rhea" id="RHEA-COMP:9657"/>
        <dbReference type="Rhea" id="RHEA-COMP:9923"/>
        <dbReference type="ChEBI" id="CHEBI:30616"/>
        <dbReference type="ChEBI" id="CHEBI:33019"/>
        <dbReference type="ChEBI" id="CHEBI:57972"/>
        <dbReference type="ChEBI" id="CHEBI:78442"/>
        <dbReference type="ChEBI" id="CHEBI:78497"/>
        <dbReference type="ChEBI" id="CHEBI:456215"/>
        <dbReference type="EC" id="6.1.1.7"/>
    </reaction>
</comment>
<comment type="catalytic activity">
    <reaction evidence="2">
        <text>(S)-lactate + ATP + H(+) = (S)-lactoyl-AMP + diphosphate</text>
        <dbReference type="Rhea" id="RHEA:80271"/>
        <dbReference type="ChEBI" id="CHEBI:15378"/>
        <dbReference type="ChEBI" id="CHEBI:16651"/>
        <dbReference type="ChEBI" id="CHEBI:30616"/>
        <dbReference type="ChEBI" id="CHEBI:33019"/>
        <dbReference type="ChEBI" id="CHEBI:231470"/>
    </reaction>
    <physiologicalReaction direction="left-to-right" evidence="2">
        <dbReference type="Rhea" id="RHEA:80272"/>
    </physiologicalReaction>
</comment>
<comment type="catalytic activity">
    <reaction evidence="2">
        <text>(S)-lactoyl-AMP + L-lysyl-[protein] = N(6)-[(S)-lactoyl]-L-lysyl-[protein] + AMP + 2 H(+)</text>
        <dbReference type="Rhea" id="RHEA:80275"/>
        <dbReference type="Rhea" id="RHEA-COMP:9752"/>
        <dbReference type="Rhea" id="RHEA-COMP:19466"/>
        <dbReference type="ChEBI" id="CHEBI:15378"/>
        <dbReference type="ChEBI" id="CHEBI:29969"/>
        <dbReference type="ChEBI" id="CHEBI:231470"/>
        <dbReference type="ChEBI" id="CHEBI:231527"/>
        <dbReference type="ChEBI" id="CHEBI:456215"/>
    </reaction>
    <physiologicalReaction direction="left-to-right" evidence="2">
        <dbReference type="Rhea" id="RHEA:80276"/>
    </physiologicalReaction>
</comment>
<comment type="cofactor">
    <cofactor evidence="2">
        <name>Zn(2+)</name>
        <dbReference type="ChEBI" id="CHEBI:29105"/>
    </cofactor>
    <text evidence="2">Binds 1 zinc ion per subunit.</text>
</comment>
<comment type="subunit">
    <text evidence="2">Monomer.</text>
</comment>
<comment type="subcellular location">
    <subcellularLocation>
        <location>Mitochondrion</location>
    </subcellularLocation>
</comment>
<comment type="domain">
    <text evidence="2">Consists of three domains; the N-terminal catalytic domain, the editing domain and the C-terminal C-Ala domain. The editing domain removes incorrectly charged amino acids, while the C-Ala domain, along with tRNA(Ala), serves as a bridge to cooperatively bring together the editing and aminoacylation centers thus stimulating deacylation of misacylated tRNAs.</text>
</comment>
<comment type="similarity">
    <text evidence="2">Belongs to the class-II aminoacyl-tRNA synthetase family.</text>
</comment>
<reference key="1">
    <citation type="submission" date="2005-07" db="EMBL/GenBank/DDBJ databases">
        <authorList>
            <person name="Mural R.J."/>
            <person name="Adams M.D."/>
            <person name="Myers E.W."/>
            <person name="Smith H.O."/>
            <person name="Venter J.C."/>
        </authorList>
    </citation>
    <scope>NUCLEOTIDE SEQUENCE [LARGE SCALE GENOMIC DNA]</scope>
    <source>
        <strain>Brown Norway</strain>
    </source>
</reference>
<feature type="transit peptide" description="Mitochondrion" evidence="2">
    <location>
        <begin position="1"/>
        <end position="23"/>
    </location>
</feature>
<feature type="chain" id="PRO_0000402117" description="Alanine--tRNA ligase, mitochondrial">
    <location>
        <begin position="24"/>
        <end position="985"/>
    </location>
</feature>
<feature type="binding site" evidence="1">
    <location>
        <position position="105"/>
    </location>
    <ligand>
        <name>ATP</name>
        <dbReference type="ChEBI" id="CHEBI:30616"/>
    </ligand>
</feature>
<feature type="binding site" evidence="1">
    <location>
        <position position="123"/>
    </location>
    <ligand>
        <name>ATP</name>
        <dbReference type="ChEBI" id="CHEBI:30616"/>
    </ligand>
</feature>
<feature type="binding site" evidence="1">
    <location>
        <position position="205"/>
    </location>
    <ligand>
        <name>ATP</name>
        <dbReference type="ChEBI" id="CHEBI:30616"/>
    </ligand>
</feature>
<feature type="binding site" evidence="1">
    <location>
        <begin position="235"/>
        <end position="237"/>
    </location>
    <ligand>
        <name>ATP</name>
        <dbReference type="ChEBI" id="CHEBI:30616"/>
    </ligand>
</feature>
<feature type="binding site" evidence="1">
    <location>
        <position position="237"/>
    </location>
    <ligand>
        <name>L-alanine</name>
        <dbReference type="ChEBI" id="CHEBI:57972"/>
    </ligand>
</feature>
<feature type="binding site" evidence="1">
    <location>
        <position position="260"/>
    </location>
    <ligand>
        <name>L-alanine</name>
        <dbReference type="ChEBI" id="CHEBI:57972"/>
    </ligand>
</feature>
<feature type="binding site" evidence="1">
    <location>
        <position position="264"/>
    </location>
    <ligand>
        <name>ATP</name>
        <dbReference type="ChEBI" id="CHEBI:30616"/>
    </ligand>
</feature>
<feature type="binding site" evidence="2">
    <location>
        <position position="632"/>
    </location>
    <ligand>
        <name>Zn(2+)</name>
        <dbReference type="ChEBI" id="CHEBI:29105"/>
    </ligand>
</feature>
<feature type="binding site" evidence="2">
    <location>
        <position position="636"/>
    </location>
    <ligand>
        <name>Zn(2+)</name>
        <dbReference type="ChEBI" id="CHEBI:29105"/>
    </ligand>
</feature>
<feature type="binding site" evidence="2">
    <location>
        <position position="749"/>
    </location>
    <ligand>
        <name>Zn(2+)</name>
        <dbReference type="ChEBI" id="CHEBI:29105"/>
    </ligand>
</feature>
<feature type="binding site" evidence="2">
    <location>
        <position position="753"/>
    </location>
    <ligand>
        <name>Zn(2+)</name>
        <dbReference type="ChEBI" id="CHEBI:29105"/>
    </ligand>
</feature>
<gene>
    <name type="primary">Aars2</name>
</gene>
<name>SYAM_RAT</name>
<accession>D3ZX08</accession>
<protein>
    <recommendedName>
        <fullName evidence="2">Alanine--tRNA ligase, mitochondrial</fullName>
        <ecNumber evidence="2">6.1.1.7</ecNumber>
    </recommendedName>
    <alternativeName>
        <fullName evidence="2">Alanyl-tRNA synthetase</fullName>
        <shortName evidence="2">AlaRS</shortName>
    </alternativeName>
    <alternativeName>
        <fullName evidence="3">Protein lactyltransferase AARS2</fullName>
        <ecNumber evidence="2">6.-.-.-</ecNumber>
    </alternativeName>
</protein>
<keyword id="KW-0030">Aminoacyl-tRNA synthetase</keyword>
<keyword id="KW-0067">ATP-binding</keyword>
<keyword id="KW-0436">Ligase</keyword>
<keyword id="KW-0479">Metal-binding</keyword>
<keyword id="KW-0496">Mitochondrion</keyword>
<keyword id="KW-0547">Nucleotide-binding</keyword>
<keyword id="KW-0648">Protein biosynthesis</keyword>
<keyword id="KW-1185">Reference proteome</keyword>
<keyword id="KW-0694">RNA-binding</keyword>
<keyword id="KW-0809">Transit peptide</keyword>
<keyword id="KW-0820">tRNA-binding</keyword>
<keyword id="KW-0862">Zinc</keyword>
<dbReference type="EC" id="6.1.1.7" evidence="2"/>
<dbReference type="EC" id="6.-.-.-" evidence="2"/>
<dbReference type="EMBL" id="CH473987">
    <property type="protein sequence ID" value="EDM18733.1"/>
    <property type="molecule type" value="Genomic_DNA"/>
</dbReference>
<dbReference type="RefSeq" id="NP_001100361.1">
    <property type="nucleotide sequence ID" value="NM_001106891.1"/>
</dbReference>
<dbReference type="SMR" id="D3ZX08"/>
<dbReference type="FunCoup" id="D3ZX08">
    <property type="interactions" value="439"/>
</dbReference>
<dbReference type="IntAct" id="D3ZX08">
    <property type="interactions" value="3"/>
</dbReference>
<dbReference type="STRING" id="10116.ENSRNOP00000037568"/>
<dbReference type="PhosphoSitePlus" id="D3ZX08"/>
<dbReference type="PaxDb" id="10116-ENSRNOP00000037568"/>
<dbReference type="PeptideAtlas" id="D3ZX08"/>
<dbReference type="GeneID" id="301254"/>
<dbReference type="KEGG" id="rno:301254"/>
<dbReference type="UCSC" id="RGD:1310617">
    <property type="organism name" value="rat"/>
</dbReference>
<dbReference type="AGR" id="RGD:1310617"/>
<dbReference type="CTD" id="57505"/>
<dbReference type="RGD" id="1310617">
    <property type="gene designation" value="Aars2"/>
</dbReference>
<dbReference type="eggNOG" id="KOG0188">
    <property type="taxonomic scope" value="Eukaryota"/>
</dbReference>
<dbReference type="HOGENOM" id="CLU_004485_5_0_1"/>
<dbReference type="InParanoid" id="D3ZX08"/>
<dbReference type="PhylomeDB" id="D3ZX08"/>
<dbReference type="TreeFam" id="TF300737"/>
<dbReference type="PRO" id="PR:D3ZX08"/>
<dbReference type="Proteomes" id="UP000002494">
    <property type="component" value="Unplaced"/>
</dbReference>
<dbReference type="Proteomes" id="UP000234681">
    <property type="component" value="Chromosome 9"/>
</dbReference>
<dbReference type="GO" id="GO:0005739">
    <property type="term" value="C:mitochondrion"/>
    <property type="evidence" value="ECO:0000250"/>
    <property type="project" value="UniProtKB"/>
</dbReference>
<dbReference type="GO" id="GO:0004813">
    <property type="term" value="F:alanine-tRNA ligase activity"/>
    <property type="evidence" value="ECO:0000266"/>
    <property type="project" value="RGD"/>
</dbReference>
<dbReference type="GO" id="GO:0002161">
    <property type="term" value="F:aminoacyl-tRNA deacylase activity"/>
    <property type="evidence" value="ECO:0000318"/>
    <property type="project" value="GO_Central"/>
</dbReference>
<dbReference type="GO" id="GO:0005524">
    <property type="term" value="F:ATP binding"/>
    <property type="evidence" value="ECO:0007669"/>
    <property type="project" value="UniProtKB-UniRule"/>
</dbReference>
<dbReference type="GO" id="GO:0141207">
    <property type="term" value="F:peptide lactyltransferase (ATP-dependent) activity"/>
    <property type="evidence" value="ECO:0000250"/>
    <property type="project" value="UniProtKB"/>
</dbReference>
<dbReference type="GO" id="GO:0000049">
    <property type="term" value="F:tRNA binding"/>
    <property type="evidence" value="ECO:0007669"/>
    <property type="project" value="UniProtKB-KW"/>
</dbReference>
<dbReference type="GO" id="GO:0008270">
    <property type="term" value="F:zinc ion binding"/>
    <property type="evidence" value="ECO:0007669"/>
    <property type="project" value="UniProtKB-UniRule"/>
</dbReference>
<dbReference type="GO" id="GO:0006419">
    <property type="term" value="P:alanyl-tRNA aminoacylation"/>
    <property type="evidence" value="ECO:0000318"/>
    <property type="project" value="GO_Central"/>
</dbReference>
<dbReference type="GO" id="GO:0070143">
    <property type="term" value="P:mitochondrial alanyl-tRNA aminoacylation"/>
    <property type="evidence" value="ECO:0000266"/>
    <property type="project" value="RGD"/>
</dbReference>
<dbReference type="GO" id="GO:0160049">
    <property type="term" value="P:negative regulation of cGAS/STING signaling pathway"/>
    <property type="evidence" value="ECO:0000250"/>
    <property type="project" value="UniProtKB"/>
</dbReference>
<dbReference type="CDD" id="cd00673">
    <property type="entry name" value="AlaRS_core"/>
    <property type="match status" value="1"/>
</dbReference>
<dbReference type="FunFam" id="3.30.930.10:FF:000011">
    <property type="entry name" value="Alanine--tRNA ligase, cytoplasmic"/>
    <property type="match status" value="1"/>
</dbReference>
<dbReference type="FunFam" id="3.30.980.10:FF:000004">
    <property type="entry name" value="Alanine--tRNA ligase, cytoplasmic"/>
    <property type="match status" value="1"/>
</dbReference>
<dbReference type="FunFam" id="2.40.30.130:FF:000005">
    <property type="entry name" value="Alanyl-tRNA synthetase 2, mitochondrial"/>
    <property type="match status" value="1"/>
</dbReference>
<dbReference type="FunFam" id="3.10.310.40:FF:000004">
    <property type="entry name" value="Alanyl-tRNA synthetase 2, mitochondrial"/>
    <property type="match status" value="1"/>
</dbReference>
<dbReference type="Gene3D" id="2.40.30.130">
    <property type="match status" value="1"/>
</dbReference>
<dbReference type="Gene3D" id="3.10.310.40">
    <property type="match status" value="1"/>
</dbReference>
<dbReference type="Gene3D" id="3.30.930.10">
    <property type="entry name" value="Bira Bifunctional Protein, Domain 2"/>
    <property type="match status" value="1"/>
</dbReference>
<dbReference type="Gene3D" id="3.30.980.10">
    <property type="entry name" value="Threonyl-trna Synthetase, Chain A, domain 2"/>
    <property type="match status" value="1"/>
</dbReference>
<dbReference type="HAMAP" id="MF_00036_B">
    <property type="entry name" value="Ala_tRNA_synth_B"/>
    <property type="match status" value="1"/>
</dbReference>
<dbReference type="InterPro" id="IPR045864">
    <property type="entry name" value="aa-tRNA-synth_II/BPL/LPL"/>
</dbReference>
<dbReference type="InterPro" id="IPR002318">
    <property type="entry name" value="Ala-tRNA-lgiase_IIc"/>
</dbReference>
<dbReference type="InterPro" id="IPR018162">
    <property type="entry name" value="Ala-tRNA-ligase_IIc_anticod-bd"/>
</dbReference>
<dbReference type="InterPro" id="IPR018165">
    <property type="entry name" value="Ala-tRNA-synth_IIc_core"/>
</dbReference>
<dbReference type="InterPro" id="IPR018164">
    <property type="entry name" value="Ala-tRNA-synth_IIc_N"/>
</dbReference>
<dbReference type="InterPro" id="IPR050058">
    <property type="entry name" value="Ala-tRNA_ligase"/>
</dbReference>
<dbReference type="InterPro" id="IPR023033">
    <property type="entry name" value="Ala_tRNA_ligase_euk/bac"/>
</dbReference>
<dbReference type="InterPro" id="IPR018163">
    <property type="entry name" value="Thr/Ala-tRNA-synth_IIc_edit"/>
</dbReference>
<dbReference type="InterPro" id="IPR009000">
    <property type="entry name" value="Transl_B-barrel_sf"/>
</dbReference>
<dbReference type="InterPro" id="IPR012947">
    <property type="entry name" value="tRNA_SAD"/>
</dbReference>
<dbReference type="NCBIfam" id="TIGR00344">
    <property type="entry name" value="alaS"/>
    <property type="match status" value="1"/>
</dbReference>
<dbReference type="PANTHER" id="PTHR11777:SF8">
    <property type="entry name" value="ALANINE--TRNA LIGASE, MITOCHONDRIAL"/>
    <property type="match status" value="1"/>
</dbReference>
<dbReference type="PANTHER" id="PTHR11777">
    <property type="entry name" value="ALANYL-TRNA SYNTHETASE"/>
    <property type="match status" value="1"/>
</dbReference>
<dbReference type="Pfam" id="PF01411">
    <property type="entry name" value="tRNA-synt_2c"/>
    <property type="match status" value="1"/>
</dbReference>
<dbReference type="Pfam" id="PF07973">
    <property type="entry name" value="tRNA_SAD"/>
    <property type="match status" value="1"/>
</dbReference>
<dbReference type="PRINTS" id="PR00980">
    <property type="entry name" value="TRNASYNTHALA"/>
</dbReference>
<dbReference type="SMART" id="SM00863">
    <property type="entry name" value="tRNA_SAD"/>
    <property type="match status" value="1"/>
</dbReference>
<dbReference type="SUPFAM" id="SSF55681">
    <property type="entry name" value="Class II aaRS and biotin synthetases"/>
    <property type="match status" value="1"/>
</dbReference>
<dbReference type="SUPFAM" id="SSF101353">
    <property type="entry name" value="Putative anticodon-binding domain of alanyl-tRNA synthetase (AlaRS)"/>
    <property type="match status" value="1"/>
</dbReference>
<dbReference type="SUPFAM" id="SSF55186">
    <property type="entry name" value="ThrRS/AlaRS common domain"/>
    <property type="match status" value="1"/>
</dbReference>
<dbReference type="SUPFAM" id="SSF50447">
    <property type="entry name" value="Translation proteins"/>
    <property type="match status" value="1"/>
</dbReference>
<dbReference type="PROSITE" id="PS50860">
    <property type="entry name" value="AA_TRNA_LIGASE_II_ALA"/>
    <property type="match status" value="1"/>
</dbReference>